<evidence type="ECO:0000255" key="1">
    <source>
        <dbReference type="HAMAP-Rule" id="MF_00379"/>
    </source>
</evidence>
<reference key="1">
    <citation type="journal article" date="2006" name="J. Bacteriol.">
        <title>Living with genome instability: the adaptation of phytoplasmas to diverse environments of their insect and plant hosts.</title>
        <authorList>
            <person name="Bai X."/>
            <person name="Zhang J."/>
            <person name="Ewing A."/>
            <person name="Miller S.A."/>
            <person name="Jancso Radek A."/>
            <person name="Shevchenko D.V."/>
            <person name="Tsukerman K."/>
            <person name="Walunas T."/>
            <person name="Lapidus A."/>
            <person name="Campbell J.W."/>
            <person name="Hogenhout S.A."/>
        </authorList>
    </citation>
    <scope>NUCLEOTIDE SEQUENCE [LARGE SCALE GENOMIC DNA]</scope>
    <source>
        <strain>AYWB</strain>
    </source>
</reference>
<name>MNME_AYWBP</name>
<dbReference type="EC" id="3.6.-.-" evidence="1"/>
<dbReference type="EMBL" id="CP000061">
    <property type="protein sequence ID" value="ABC65782.1"/>
    <property type="molecule type" value="Genomic_DNA"/>
</dbReference>
<dbReference type="RefSeq" id="WP_011412943.1">
    <property type="nucleotide sequence ID" value="NC_007716.1"/>
</dbReference>
<dbReference type="SMR" id="Q2NIG1"/>
<dbReference type="STRING" id="322098.AYWB_665"/>
<dbReference type="KEGG" id="ayw:AYWB_665"/>
<dbReference type="eggNOG" id="COG0486">
    <property type="taxonomic scope" value="Bacteria"/>
</dbReference>
<dbReference type="HOGENOM" id="CLU_019624_4_1_14"/>
<dbReference type="OrthoDB" id="9805918at2"/>
<dbReference type="PhylomeDB" id="Q2NIG1"/>
<dbReference type="Proteomes" id="UP000001934">
    <property type="component" value="Chromosome"/>
</dbReference>
<dbReference type="GO" id="GO:0005829">
    <property type="term" value="C:cytosol"/>
    <property type="evidence" value="ECO:0007669"/>
    <property type="project" value="TreeGrafter"/>
</dbReference>
<dbReference type="GO" id="GO:0005525">
    <property type="term" value="F:GTP binding"/>
    <property type="evidence" value="ECO:0007669"/>
    <property type="project" value="UniProtKB-UniRule"/>
</dbReference>
<dbReference type="GO" id="GO:0003924">
    <property type="term" value="F:GTPase activity"/>
    <property type="evidence" value="ECO:0007669"/>
    <property type="project" value="UniProtKB-UniRule"/>
</dbReference>
<dbReference type="GO" id="GO:0046872">
    <property type="term" value="F:metal ion binding"/>
    <property type="evidence" value="ECO:0007669"/>
    <property type="project" value="UniProtKB-KW"/>
</dbReference>
<dbReference type="GO" id="GO:0030488">
    <property type="term" value="P:tRNA methylation"/>
    <property type="evidence" value="ECO:0007669"/>
    <property type="project" value="TreeGrafter"/>
</dbReference>
<dbReference type="GO" id="GO:0002098">
    <property type="term" value="P:tRNA wobble uridine modification"/>
    <property type="evidence" value="ECO:0007669"/>
    <property type="project" value="TreeGrafter"/>
</dbReference>
<dbReference type="CDD" id="cd04164">
    <property type="entry name" value="trmE"/>
    <property type="match status" value="1"/>
</dbReference>
<dbReference type="CDD" id="cd14858">
    <property type="entry name" value="TrmE_N"/>
    <property type="match status" value="1"/>
</dbReference>
<dbReference type="FunFam" id="3.30.1360.120:FF:000003">
    <property type="entry name" value="tRNA modification GTPase MnmE"/>
    <property type="match status" value="1"/>
</dbReference>
<dbReference type="FunFam" id="3.40.50.300:FF:000494">
    <property type="entry name" value="tRNA modification GTPase MnmE"/>
    <property type="match status" value="1"/>
</dbReference>
<dbReference type="Gene3D" id="3.40.50.300">
    <property type="entry name" value="P-loop containing nucleotide triphosphate hydrolases"/>
    <property type="match status" value="1"/>
</dbReference>
<dbReference type="Gene3D" id="3.30.1360.120">
    <property type="entry name" value="Probable tRNA modification gtpase trme, domain 1"/>
    <property type="match status" value="1"/>
</dbReference>
<dbReference type="Gene3D" id="1.20.120.430">
    <property type="entry name" value="tRNA modification GTPase MnmE domain 2"/>
    <property type="match status" value="1"/>
</dbReference>
<dbReference type="HAMAP" id="MF_00379">
    <property type="entry name" value="GTPase_MnmE"/>
    <property type="match status" value="1"/>
</dbReference>
<dbReference type="InterPro" id="IPR031168">
    <property type="entry name" value="G_TrmE"/>
</dbReference>
<dbReference type="InterPro" id="IPR006073">
    <property type="entry name" value="GTP-bd"/>
</dbReference>
<dbReference type="InterPro" id="IPR018948">
    <property type="entry name" value="GTP-bd_TrmE_N"/>
</dbReference>
<dbReference type="InterPro" id="IPR004520">
    <property type="entry name" value="GTPase_MnmE"/>
</dbReference>
<dbReference type="InterPro" id="IPR027368">
    <property type="entry name" value="MnmE_dom2"/>
</dbReference>
<dbReference type="InterPro" id="IPR025867">
    <property type="entry name" value="MnmE_helical"/>
</dbReference>
<dbReference type="InterPro" id="IPR027417">
    <property type="entry name" value="P-loop_NTPase"/>
</dbReference>
<dbReference type="InterPro" id="IPR005225">
    <property type="entry name" value="Small_GTP-bd"/>
</dbReference>
<dbReference type="InterPro" id="IPR027266">
    <property type="entry name" value="TrmE/GcvT_dom1"/>
</dbReference>
<dbReference type="NCBIfam" id="TIGR00450">
    <property type="entry name" value="mnmE_trmE_thdF"/>
    <property type="match status" value="1"/>
</dbReference>
<dbReference type="NCBIfam" id="TIGR00231">
    <property type="entry name" value="small_GTP"/>
    <property type="match status" value="1"/>
</dbReference>
<dbReference type="PANTHER" id="PTHR42714">
    <property type="entry name" value="TRNA MODIFICATION GTPASE GTPBP3"/>
    <property type="match status" value="1"/>
</dbReference>
<dbReference type="PANTHER" id="PTHR42714:SF2">
    <property type="entry name" value="TRNA MODIFICATION GTPASE GTPBP3, MITOCHONDRIAL"/>
    <property type="match status" value="1"/>
</dbReference>
<dbReference type="Pfam" id="PF01926">
    <property type="entry name" value="MMR_HSR1"/>
    <property type="match status" value="1"/>
</dbReference>
<dbReference type="Pfam" id="PF12631">
    <property type="entry name" value="MnmE_helical"/>
    <property type="match status" value="1"/>
</dbReference>
<dbReference type="Pfam" id="PF10396">
    <property type="entry name" value="TrmE_N"/>
    <property type="match status" value="1"/>
</dbReference>
<dbReference type="PRINTS" id="PR00449">
    <property type="entry name" value="RASTRNSFRMNG"/>
</dbReference>
<dbReference type="SUPFAM" id="SSF52540">
    <property type="entry name" value="P-loop containing nucleoside triphosphate hydrolases"/>
    <property type="match status" value="1"/>
</dbReference>
<dbReference type="PROSITE" id="PS51709">
    <property type="entry name" value="G_TRME"/>
    <property type="match status" value="1"/>
</dbReference>
<keyword id="KW-0963">Cytoplasm</keyword>
<keyword id="KW-0342">GTP-binding</keyword>
<keyword id="KW-0378">Hydrolase</keyword>
<keyword id="KW-0460">Magnesium</keyword>
<keyword id="KW-0479">Metal-binding</keyword>
<keyword id="KW-0547">Nucleotide-binding</keyword>
<keyword id="KW-0630">Potassium</keyword>
<keyword id="KW-0819">tRNA processing</keyword>
<protein>
    <recommendedName>
        <fullName evidence="1">tRNA modification GTPase MnmE</fullName>
        <ecNumber evidence="1">3.6.-.-</ecNumber>
    </recommendedName>
</protein>
<sequence>MFFDTIAAISTPLGTGGVSVIRVSGNNSITEINKIFKGKNLIKAKTHTITHGFILNKDQTILDEVLISVFKTPNSFTGENVVEINAHGGILITQMVLERILSLDIRLAFPGEFSQRAYLNGKMDLIQAESIMDLIHATNENAIKIANSGLQKYTSQLVTSLRDQILNLIAQIEVNIDYPEYDDIPQITQQKIALEVQSLIKQLENILSHSHKNRYLKEGIKTLIIGRPNVGKSSLLNAFLNENKAIVSDISGTTRDFVEAYFNCRGFTLHLIDTAGIRKTDDPIEKIGILRTEKMLLQAELILLVLDQSNYLQEEDIQLLQLTQNYPRIIIGNKVDLKSDKLISSLCDYSSQLTPQEIISVSSLDKTGFFELQQTILKKFQLNDIKPKDFNYFSNARHINQIQIALRSFQDLQQALLQSMPIDIYSIDLTKAYQALGQIIGENQENSLIKELFSKFCLGK</sequence>
<proteinExistence type="inferred from homology"/>
<accession>Q2NIG1</accession>
<feature type="chain" id="PRO_1000048796" description="tRNA modification GTPase MnmE">
    <location>
        <begin position="1"/>
        <end position="460"/>
    </location>
</feature>
<feature type="domain" description="TrmE-type G">
    <location>
        <begin position="219"/>
        <end position="381"/>
    </location>
</feature>
<feature type="binding site" evidence="1">
    <location>
        <position position="22"/>
    </location>
    <ligand>
        <name>(6S)-5-formyl-5,6,7,8-tetrahydrofolate</name>
        <dbReference type="ChEBI" id="CHEBI:57457"/>
    </ligand>
</feature>
<feature type="binding site" evidence="1">
    <location>
        <position position="83"/>
    </location>
    <ligand>
        <name>(6S)-5-formyl-5,6,7,8-tetrahydrofolate</name>
        <dbReference type="ChEBI" id="CHEBI:57457"/>
    </ligand>
</feature>
<feature type="binding site" evidence="1">
    <location>
        <position position="122"/>
    </location>
    <ligand>
        <name>(6S)-5-formyl-5,6,7,8-tetrahydrofolate</name>
        <dbReference type="ChEBI" id="CHEBI:57457"/>
    </ligand>
</feature>
<feature type="binding site" evidence="1">
    <location>
        <begin position="229"/>
        <end position="234"/>
    </location>
    <ligand>
        <name>GTP</name>
        <dbReference type="ChEBI" id="CHEBI:37565"/>
    </ligand>
</feature>
<feature type="binding site" evidence="1">
    <location>
        <position position="229"/>
    </location>
    <ligand>
        <name>K(+)</name>
        <dbReference type="ChEBI" id="CHEBI:29103"/>
    </ligand>
</feature>
<feature type="binding site" evidence="1">
    <location>
        <position position="233"/>
    </location>
    <ligand>
        <name>Mg(2+)</name>
        <dbReference type="ChEBI" id="CHEBI:18420"/>
    </ligand>
</feature>
<feature type="binding site" evidence="1">
    <location>
        <begin position="248"/>
        <end position="254"/>
    </location>
    <ligand>
        <name>GTP</name>
        <dbReference type="ChEBI" id="CHEBI:37565"/>
    </ligand>
</feature>
<feature type="binding site" evidence="1">
    <location>
        <position position="248"/>
    </location>
    <ligand>
        <name>K(+)</name>
        <dbReference type="ChEBI" id="CHEBI:29103"/>
    </ligand>
</feature>
<feature type="binding site" evidence="1">
    <location>
        <position position="250"/>
    </location>
    <ligand>
        <name>K(+)</name>
        <dbReference type="ChEBI" id="CHEBI:29103"/>
    </ligand>
</feature>
<feature type="binding site" evidence="1">
    <location>
        <position position="253"/>
    </location>
    <ligand>
        <name>K(+)</name>
        <dbReference type="ChEBI" id="CHEBI:29103"/>
    </ligand>
</feature>
<feature type="binding site" evidence="1">
    <location>
        <position position="254"/>
    </location>
    <ligand>
        <name>Mg(2+)</name>
        <dbReference type="ChEBI" id="CHEBI:18420"/>
    </ligand>
</feature>
<feature type="binding site" evidence="1">
    <location>
        <begin position="273"/>
        <end position="276"/>
    </location>
    <ligand>
        <name>GTP</name>
        <dbReference type="ChEBI" id="CHEBI:37565"/>
    </ligand>
</feature>
<feature type="binding site" evidence="1">
    <location>
        <position position="460"/>
    </location>
    <ligand>
        <name>(6S)-5-formyl-5,6,7,8-tetrahydrofolate</name>
        <dbReference type="ChEBI" id="CHEBI:57457"/>
    </ligand>
</feature>
<gene>
    <name evidence="1" type="primary">mnmE</name>
    <name evidence="1" type="synonym">trmE</name>
    <name type="ordered locus">AYWB_665</name>
</gene>
<organism>
    <name type="scientific">Aster yellows witches'-broom phytoplasma (strain AYWB)</name>
    <dbReference type="NCBI Taxonomy" id="322098"/>
    <lineage>
        <taxon>Bacteria</taxon>
        <taxon>Bacillati</taxon>
        <taxon>Mycoplasmatota</taxon>
        <taxon>Mollicutes</taxon>
        <taxon>Acholeplasmatales</taxon>
        <taxon>Acholeplasmataceae</taxon>
        <taxon>Candidatus Phytoplasma</taxon>
        <taxon>16SrI (Aster yellows group)</taxon>
    </lineage>
</organism>
<comment type="function">
    <text evidence="1">Exhibits a very high intrinsic GTPase hydrolysis rate. Involved in the addition of a carboxymethylaminomethyl (cmnm) group at the wobble position (U34) of certain tRNAs, forming tRNA-cmnm(5)s(2)U34.</text>
</comment>
<comment type="cofactor">
    <cofactor evidence="1">
        <name>K(+)</name>
        <dbReference type="ChEBI" id="CHEBI:29103"/>
    </cofactor>
    <text evidence="1">Binds 1 potassium ion per subunit.</text>
</comment>
<comment type="subunit">
    <text evidence="1">Homodimer. Heterotetramer of two MnmE and two MnmG subunits.</text>
</comment>
<comment type="subcellular location">
    <subcellularLocation>
        <location evidence="1">Cytoplasm</location>
    </subcellularLocation>
</comment>
<comment type="similarity">
    <text evidence="1">Belongs to the TRAFAC class TrmE-Era-EngA-EngB-Septin-like GTPase superfamily. TrmE GTPase family.</text>
</comment>